<sequence>MFEPYVKIKKKRSVNEIYENENLEQQQHHLQQQQQQPATSDNCCCENGEPQNAPEVATATVAATSVAATSAAATVATGAAASSSSSGNCSRLQQLISTPPVLLRRSSLQQQQHQQQQHHPHTPAATATPPQQQQQQQAAPSVLQQHLGHLNYESGATAAAAATAAAAAATVATSRSGSATLAQHLATPSNILQAAFGSSNLQHILTRSAPSPSSSAISSNNCSSACAGNTHYNGGNSNSGSSSSNSNHHSNSIIASRLFGAASSSSSSSSSSASASSSSVAASSSSSSHHLHSHHSALTNSITNRINQSIRRHLNQQQHHHPLSASSSSASASPSASTSSSSSYQQSSVQQQHYNCAHPAQQQQHHHHHHSSSSSSSSSSSSSHHHHNSSSSSNSNNQQQPQQSPLCLVLLVKCPNSKEFCNAAANFCDKRLPVNECQASQTARVTSNLHASSSTMAVSRVPSPPLPEVNTPVAENWCYTQVKVVKFSYMWTINNFSFCREEMGEVLKSSTFSAGANDKLKWCLRVNPKGLDEESKDYLSLYLLLVSCNKSEVRAKFKFSILNAKREETKAMESQRAYRFVQGKDWGFKKFIRRDFLLDEANGLLPEDKLTIFCEVSVVADSVNISGQSNIVQFKVPECKLSEDLGNLFDNEKFSDVTLSVGGREFQAHKAILAARSDVFAAMFEHEMEERKLNRVAITDVDHEVLKEMLRFIYTGKAPNLEKMADDLLAAADKYALEKLKVMCEEALCVNLSVETAAETLILADLHSADQLKAQTIDFINTHATDVMETSGWQNMITTHSHLIAEAFRALATQQIPPIGPPRKRVKMS</sequence>
<reference key="1">
    <citation type="journal article" date="2006" name="Development">
        <title>Roadkill attenuates Hedgehog responses through degradation of Cubitus interruptus.</title>
        <authorList>
            <person name="Kent D."/>
            <person name="Bush E.W."/>
            <person name="Hooper J.E."/>
        </authorList>
    </citation>
    <scope>NUCLEOTIDE SEQUENCE [MRNA] (ISOFORM 1)</scope>
    <scope>DEVELOPMENTAL STAGE</scope>
    <scope>INDUCTION</scope>
    <scope>FUNCTION</scope>
</reference>
<reference key="2">
    <citation type="journal article" date="2000" name="Science">
        <title>The genome sequence of Drosophila melanogaster.</title>
        <authorList>
            <person name="Adams M.D."/>
            <person name="Celniker S.E."/>
            <person name="Holt R.A."/>
            <person name="Evans C.A."/>
            <person name="Gocayne J.D."/>
            <person name="Amanatides P.G."/>
            <person name="Scherer S.E."/>
            <person name="Li P.W."/>
            <person name="Hoskins R.A."/>
            <person name="Galle R.F."/>
            <person name="George R.A."/>
            <person name="Lewis S.E."/>
            <person name="Richards S."/>
            <person name="Ashburner M."/>
            <person name="Henderson S.N."/>
            <person name="Sutton G.G."/>
            <person name="Wortman J.R."/>
            <person name="Yandell M.D."/>
            <person name="Zhang Q."/>
            <person name="Chen L.X."/>
            <person name="Brandon R.C."/>
            <person name="Rogers Y.-H.C."/>
            <person name="Blazej R.G."/>
            <person name="Champe M."/>
            <person name="Pfeiffer B.D."/>
            <person name="Wan K.H."/>
            <person name="Doyle C."/>
            <person name="Baxter E.G."/>
            <person name="Helt G."/>
            <person name="Nelson C.R."/>
            <person name="Miklos G.L.G."/>
            <person name="Abril J.F."/>
            <person name="Agbayani A."/>
            <person name="An H.-J."/>
            <person name="Andrews-Pfannkoch C."/>
            <person name="Baldwin D."/>
            <person name="Ballew R.M."/>
            <person name="Basu A."/>
            <person name="Baxendale J."/>
            <person name="Bayraktaroglu L."/>
            <person name="Beasley E.M."/>
            <person name="Beeson K.Y."/>
            <person name="Benos P.V."/>
            <person name="Berman B.P."/>
            <person name="Bhandari D."/>
            <person name="Bolshakov S."/>
            <person name="Borkova D."/>
            <person name="Botchan M.R."/>
            <person name="Bouck J."/>
            <person name="Brokstein P."/>
            <person name="Brottier P."/>
            <person name="Burtis K.C."/>
            <person name="Busam D.A."/>
            <person name="Butler H."/>
            <person name="Cadieu E."/>
            <person name="Center A."/>
            <person name="Chandra I."/>
            <person name="Cherry J.M."/>
            <person name="Cawley S."/>
            <person name="Dahlke C."/>
            <person name="Davenport L.B."/>
            <person name="Davies P."/>
            <person name="de Pablos B."/>
            <person name="Delcher A."/>
            <person name="Deng Z."/>
            <person name="Mays A.D."/>
            <person name="Dew I."/>
            <person name="Dietz S.M."/>
            <person name="Dodson K."/>
            <person name="Doup L.E."/>
            <person name="Downes M."/>
            <person name="Dugan-Rocha S."/>
            <person name="Dunkov B.C."/>
            <person name="Dunn P."/>
            <person name="Durbin K.J."/>
            <person name="Evangelista C.C."/>
            <person name="Ferraz C."/>
            <person name="Ferriera S."/>
            <person name="Fleischmann W."/>
            <person name="Fosler C."/>
            <person name="Gabrielian A.E."/>
            <person name="Garg N.S."/>
            <person name="Gelbart W.M."/>
            <person name="Glasser K."/>
            <person name="Glodek A."/>
            <person name="Gong F."/>
            <person name="Gorrell J.H."/>
            <person name="Gu Z."/>
            <person name="Guan P."/>
            <person name="Harris M."/>
            <person name="Harris N.L."/>
            <person name="Harvey D.A."/>
            <person name="Heiman T.J."/>
            <person name="Hernandez J.R."/>
            <person name="Houck J."/>
            <person name="Hostin D."/>
            <person name="Houston K.A."/>
            <person name="Howland T.J."/>
            <person name="Wei M.-H."/>
            <person name="Ibegwam C."/>
            <person name="Jalali M."/>
            <person name="Kalush F."/>
            <person name="Karpen G.H."/>
            <person name="Ke Z."/>
            <person name="Kennison J.A."/>
            <person name="Ketchum K.A."/>
            <person name="Kimmel B.E."/>
            <person name="Kodira C.D."/>
            <person name="Kraft C.L."/>
            <person name="Kravitz S."/>
            <person name="Kulp D."/>
            <person name="Lai Z."/>
            <person name="Lasko P."/>
            <person name="Lei Y."/>
            <person name="Levitsky A.A."/>
            <person name="Li J.H."/>
            <person name="Li Z."/>
            <person name="Liang Y."/>
            <person name="Lin X."/>
            <person name="Liu X."/>
            <person name="Mattei B."/>
            <person name="McIntosh T.C."/>
            <person name="McLeod M.P."/>
            <person name="McPherson D."/>
            <person name="Merkulov G."/>
            <person name="Milshina N.V."/>
            <person name="Mobarry C."/>
            <person name="Morris J."/>
            <person name="Moshrefi A."/>
            <person name="Mount S.M."/>
            <person name="Moy M."/>
            <person name="Murphy B."/>
            <person name="Murphy L."/>
            <person name="Muzny D.M."/>
            <person name="Nelson D.L."/>
            <person name="Nelson D.R."/>
            <person name="Nelson K.A."/>
            <person name="Nixon K."/>
            <person name="Nusskern D.R."/>
            <person name="Pacleb J.M."/>
            <person name="Palazzolo M."/>
            <person name="Pittman G.S."/>
            <person name="Pan S."/>
            <person name="Pollard J."/>
            <person name="Puri V."/>
            <person name="Reese M.G."/>
            <person name="Reinert K."/>
            <person name="Remington K."/>
            <person name="Saunders R.D.C."/>
            <person name="Scheeler F."/>
            <person name="Shen H."/>
            <person name="Shue B.C."/>
            <person name="Siden-Kiamos I."/>
            <person name="Simpson M."/>
            <person name="Skupski M.P."/>
            <person name="Smith T.J."/>
            <person name="Spier E."/>
            <person name="Spradling A.C."/>
            <person name="Stapleton M."/>
            <person name="Strong R."/>
            <person name="Sun E."/>
            <person name="Svirskas R."/>
            <person name="Tector C."/>
            <person name="Turner R."/>
            <person name="Venter E."/>
            <person name="Wang A.H."/>
            <person name="Wang X."/>
            <person name="Wang Z.-Y."/>
            <person name="Wassarman D.A."/>
            <person name="Weinstock G.M."/>
            <person name="Weissenbach J."/>
            <person name="Williams S.M."/>
            <person name="Woodage T."/>
            <person name="Worley K.C."/>
            <person name="Wu D."/>
            <person name="Yang S."/>
            <person name="Yao Q.A."/>
            <person name="Ye J."/>
            <person name="Yeh R.-F."/>
            <person name="Zaveri J.S."/>
            <person name="Zhan M."/>
            <person name="Zhang G."/>
            <person name="Zhao Q."/>
            <person name="Zheng L."/>
            <person name="Zheng X.H."/>
            <person name="Zhong F.N."/>
            <person name="Zhong W."/>
            <person name="Zhou X."/>
            <person name="Zhu S.C."/>
            <person name="Zhu X."/>
            <person name="Smith H.O."/>
            <person name="Gibbs R.A."/>
            <person name="Myers E.W."/>
            <person name="Rubin G.M."/>
            <person name="Venter J.C."/>
        </authorList>
    </citation>
    <scope>NUCLEOTIDE SEQUENCE [LARGE SCALE GENOMIC DNA]</scope>
    <source>
        <strain>Berkeley</strain>
    </source>
</reference>
<reference key="3">
    <citation type="journal article" date="2002" name="Genome Biol.">
        <title>Annotation of the Drosophila melanogaster euchromatic genome: a systematic review.</title>
        <authorList>
            <person name="Misra S."/>
            <person name="Crosby M.A."/>
            <person name="Mungall C.J."/>
            <person name="Matthews B.B."/>
            <person name="Campbell K.S."/>
            <person name="Hradecky P."/>
            <person name="Huang Y."/>
            <person name="Kaminker J.S."/>
            <person name="Millburn G.H."/>
            <person name="Prochnik S.E."/>
            <person name="Smith C.D."/>
            <person name="Tupy J.L."/>
            <person name="Whitfield E.J."/>
            <person name="Bayraktaroglu L."/>
            <person name="Berman B.P."/>
            <person name="Bettencourt B.R."/>
            <person name="Celniker S.E."/>
            <person name="de Grey A.D.N.J."/>
            <person name="Drysdale R.A."/>
            <person name="Harris N.L."/>
            <person name="Richter J."/>
            <person name="Russo S."/>
            <person name="Schroeder A.J."/>
            <person name="Shu S.Q."/>
            <person name="Stapleton M."/>
            <person name="Yamada C."/>
            <person name="Ashburner M."/>
            <person name="Gelbart W.M."/>
            <person name="Rubin G.M."/>
            <person name="Lewis S.E."/>
        </authorList>
    </citation>
    <scope>GENOME REANNOTATION</scope>
    <scope>ALTERNATIVE SPLICING</scope>
    <source>
        <strain>Berkeley</strain>
    </source>
</reference>
<reference key="4">
    <citation type="journal article" date="2002" name="Genome Biol.">
        <title>A Drosophila full-length cDNA resource.</title>
        <authorList>
            <person name="Stapleton M."/>
            <person name="Carlson J.W."/>
            <person name="Brokstein P."/>
            <person name="Yu C."/>
            <person name="Champe M."/>
            <person name="George R.A."/>
            <person name="Guarin H."/>
            <person name="Kronmiller B."/>
            <person name="Pacleb J.M."/>
            <person name="Park S."/>
            <person name="Wan K.H."/>
            <person name="Rubin G.M."/>
            <person name="Celniker S.E."/>
        </authorList>
    </citation>
    <scope>NUCLEOTIDE SEQUENCE [LARGE SCALE MRNA] (ISOFORMS 1; 2 AND 3)</scope>
    <source>
        <strain>Berkeley</strain>
        <tissue>Embryo</tissue>
    </source>
</reference>
<reference key="5">
    <citation type="journal article" date="2006" name="Dev. Cell">
        <title>A hedgehog-induced BTB protein modulates hedgehog signaling by degrading Ci/Gli transcription factor.</title>
        <authorList>
            <person name="Zhang Q."/>
            <person name="Zhang L."/>
            <person name="Wang B."/>
            <person name="Ou C.-Y."/>
            <person name="Chien C.-T."/>
            <person name="Jiang J."/>
        </authorList>
    </citation>
    <scope>INTERACTION WITH CI AND GFT</scope>
    <scope>TISSUE SPECIFICITY</scope>
    <scope>INDUCTION</scope>
    <scope>FUNCTION</scope>
    <scope>SUBCELLULAR LOCATION</scope>
</reference>
<name>RDX_DROME</name>
<proteinExistence type="evidence at protein level"/>
<accession>Q9VFP2</accession>
<accession>A4V2V6</accession>
<accession>Q15BT8</accession>
<accession>Q5BIA3</accession>
<accession>Q7KSK6</accession>
<accession>Q8ING4</accession>
<accession>Q8MRB4</accession>
<accession>Q9VFP3</accession>
<organism>
    <name type="scientific">Drosophila melanogaster</name>
    <name type="common">Fruit fly</name>
    <dbReference type="NCBI Taxonomy" id="7227"/>
    <lineage>
        <taxon>Eukaryota</taxon>
        <taxon>Metazoa</taxon>
        <taxon>Ecdysozoa</taxon>
        <taxon>Arthropoda</taxon>
        <taxon>Hexapoda</taxon>
        <taxon>Insecta</taxon>
        <taxon>Pterygota</taxon>
        <taxon>Neoptera</taxon>
        <taxon>Endopterygota</taxon>
        <taxon>Diptera</taxon>
        <taxon>Brachycera</taxon>
        <taxon>Muscomorpha</taxon>
        <taxon>Ephydroidea</taxon>
        <taxon>Drosophilidae</taxon>
        <taxon>Drosophila</taxon>
        <taxon>Sophophora</taxon>
    </lineage>
</organism>
<dbReference type="EMBL" id="DQ507278">
    <property type="protein sequence ID" value="ABG24573.1"/>
    <property type="molecule type" value="mRNA"/>
</dbReference>
<dbReference type="EMBL" id="AE014297">
    <property type="protein sequence ID" value="AAF55007.3"/>
    <property type="molecule type" value="Genomic_DNA"/>
</dbReference>
<dbReference type="EMBL" id="AE014297">
    <property type="protein sequence ID" value="AAF55008.2"/>
    <property type="molecule type" value="Genomic_DNA"/>
</dbReference>
<dbReference type="EMBL" id="AE014297">
    <property type="protein sequence ID" value="AAN14346.1"/>
    <property type="molecule type" value="Genomic_DNA"/>
</dbReference>
<dbReference type="EMBL" id="AE014297">
    <property type="protein sequence ID" value="AAN14347.2"/>
    <property type="molecule type" value="Genomic_DNA"/>
</dbReference>
<dbReference type="EMBL" id="AE014297">
    <property type="protein sequence ID" value="AAN14348.1"/>
    <property type="molecule type" value="Genomic_DNA"/>
</dbReference>
<dbReference type="EMBL" id="AY121682">
    <property type="protein sequence ID" value="AAM52009.1"/>
    <property type="molecule type" value="mRNA"/>
</dbReference>
<dbReference type="EMBL" id="BT012443">
    <property type="protein sequence ID" value="AAS93714.1"/>
    <property type="molecule type" value="mRNA"/>
</dbReference>
<dbReference type="EMBL" id="BT021321">
    <property type="protein sequence ID" value="AAX33469.1"/>
    <property type="molecule type" value="mRNA"/>
</dbReference>
<dbReference type="RefSeq" id="NP_650325.1">
    <molecule id="Q9VFP2-3"/>
    <property type="nucleotide sequence ID" value="NM_142068.2"/>
</dbReference>
<dbReference type="RefSeq" id="NP_650326.3">
    <molecule id="Q9VFP2-1"/>
    <property type="nucleotide sequence ID" value="NM_142069.4"/>
</dbReference>
<dbReference type="RefSeq" id="NP_731875.2">
    <molecule id="Q9VFP2-4"/>
    <property type="nucleotide sequence ID" value="NM_169564.2"/>
</dbReference>
<dbReference type="RefSeq" id="NP_731876.2">
    <molecule id="Q9VFP2-4"/>
    <property type="nucleotide sequence ID" value="NM_169565.2"/>
</dbReference>
<dbReference type="RefSeq" id="NP_731877.1">
    <molecule id="Q9VFP2-2"/>
    <property type="nucleotide sequence ID" value="NM_169566.2"/>
</dbReference>
<dbReference type="SMR" id="Q9VFP2"/>
<dbReference type="BioGRID" id="66781">
    <property type="interactions" value="50"/>
</dbReference>
<dbReference type="DIP" id="DIP-29550N"/>
<dbReference type="FunCoup" id="Q9VFP2">
    <property type="interactions" value="130"/>
</dbReference>
<dbReference type="IntAct" id="Q9VFP2">
    <property type="interactions" value="12"/>
</dbReference>
<dbReference type="STRING" id="7227.FBpp0099767"/>
<dbReference type="PaxDb" id="7227-FBpp0099767"/>
<dbReference type="DNASU" id="41704"/>
<dbReference type="EnsemblMetazoa" id="FBtr0100361">
    <molecule id="Q9VFP2-1"/>
    <property type="protein sequence ID" value="FBpp0099767"/>
    <property type="gene ID" value="FBgn0264493"/>
</dbReference>
<dbReference type="EnsemblMetazoa" id="FBtr0301632">
    <molecule id="Q9VFP2-4"/>
    <property type="protein sequence ID" value="FBpp0290846"/>
    <property type="gene ID" value="FBgn0264493"/>
</dbReference>
<dbReference type="EnsemblMetazoa" id="FBtr0301633">
    <molecule id="Q9VFP2-2"/>
    <property type="protein sequence ID" value="FBpp0290847"/>
    <property type="gene ID" value="FBgn0264493"/>
</dbReference>
<dbReference type="EnsemblMetazoa" id="FBtr0301634">
    <molecule id="Q9VFP2-3"/>
    <property type="protein sequence ID" value="FBpp0290848"/>
    <property type="gene ID" value="FBgn0264493"/>
</dbReference>
<dbReference type="EnsemblMetazoa" id="FBtr0334298">
    <molecule id="Q9VFP2-4"/>
    <property type="protein sequence ID" value="FBpp0306413"/>
    <property type="gene ID" value="FBgn0264493"/>
</dbReference>
<dbReference type="GeneID" id="41704"/>
<dbReference type="KEGG" id="dme:Dmel_CG12537"/>
<dbReference type="AGR" id="FB:FBgn0264493"/>
<dbReference type="CTD" id="5962"/>
<dbReference type="FlyBase" id="FBgn0264493">
    <property type="gene designation" value="rdx"/>
</dbReference>
<dbReference type="VEuPathDB" id="VectorBase:FBgn0264493"/>
<dbReference type="eggNOG" id="KOG1987">
    <property type="taxonomic scope" value="Eukaryota"/>
</dbReference>
<dbReference type="HOGENOM" id="CLU_320366_0_0_1"/>
<dbReference type="InParanoid" id="Q9VFP2"/>
<dbReference type="OMA" id="PHFNCAH"/>
<dbReference type="OrthoDB" id="6359816at2759"/>
<dbReference type="PhylomeDB" id="Q9VFP2"/>
<dbReference type="Reactome" id="R-DME-216167">
    <property type="pathway name" value="Nuclear CI is degraded"/>
</dbReference>
<dbReference type="Reactome" id="R-DME-5632684">
    <property type="pathway name" value="Hedgehog 'on' state"/>
</dbReference>
<dbReference type="Reactome" id="R-DME-6811440">
    <property type="pathway name" value="Retrograde transport at the Trans-Golgi-Network"/>
</dbReference>
<dbReference type="Reactome" id="R-DME-9706019">
    <property type="pathway name" value="RHOBTB3 ATPase cycle"/>
</dbReference>
<dbReference type="SignaLink" id="Q9VFP2"/>
<dbReference type="UniPathway" id="UPA00143"/>
<dbReference type="BioGRID-ORCS" id="41704">
    <property type="hits" value="0 hits in 3 CRISPR screens"/>
</dbReference>
<dbReference type="ChiTaRS" id="rdx">
    <property type="organism name" value="fly"/>
</dbReference>
<dbReference type="GenomeRNAi" id="41704"/>
<dbReference type="PRO" id="PR:Q9VFP2"/>
<dbReference type="Proteomes" id="UP000000803">
    <property type="component" value="Chromosome 3R"/>
</dbReference>
<dbReference type="Bgee" id="FBgn0264493">
    <property type="expression patterns" value="Expressed in dorsal appendage forming follicle cell in ovary and 313 other cell types or tissues"/>
</dbReference>
<dbReference type="ExpressionAtlas" id="Q9VFP2">
    <property type="expression patterns" value="baseline and differential"/>
</dbReference>
<dbReference type="GO" id="GO:0031463">
    <property type="term" value="C:Cul3-RING ubiquitin ligase complex"/>
    <property type="evidence" value="ECO:0000314"/>
    <property type="project" value="FlyBase"/>
</dbReference>
<dbReference type="GO" id="GO:0005737">
    <property type="term" value="C:cytoplasm"/>
    <property type="evidence" value="ECO:0000318"/>
    <property type="project" value="GO_Central"/>
</dbReference>
<dbReference type="GO" id="GO:0005654">
    <property type="term" value="C:nucleoplasm"/>
    <property type="evidence" value="ECO:0000304"/>
    <property type="project" value="Reactome"/>
</dbReference>
<dbReference type="GO" id="GO:0005634">
    <property type="term" value="C:nucleus"/>
    <property type="evidence" value="ECO:0000314"/>
    <property type="project" value="UniProtKB"/>
</dbReference>
<dbReference type="GO" id="GO:0042802">
    <property type="term" value="F:identical protein binding"/>
    <property type="evidence" value="ECO:0000353"/>
    <property type="project" value="IntAct"/>
</dbReference>
<dbReference type="GO" id="GO:0042803">
    <property type="term" value="F:protein homodimerization activity"/>
    <property type="evidence" value="ECO:0000314"/>
    <property type="project" value="FlyBase"/>
</dbReference>
<dbReference type="GO" id="GO:0031625">
    <property type="term" value="F:ubiquitin protein ligase binding"/>
    <property type="evidence" value="ECO:0000318"/>
    <property type="project" value="GO_Central"/>
</dbReference>
<dbReference type="GO" id="GO:1990756">
    <property type="term" value="F:ubiquitin-like ligase-substrate adaptor activity"/>
    <property type="evidence" value="ECO:0000314"/>
    <property type="project" value="FlyBase"/>
</dbReference>
<dbReference type="GO" id="GO:0001745">
    <property type="term" value="P:compound eye morphogenesis"/>
    <property type="evidence" value="ECO:0000315"/>
    <property type="project" value="FlyBase"/>
</dbReference>
<dbReference type="GO" id="GO:0001654">
    <property type="term" value="P:eye development"/>
    <property type="evidence" value="ECO:0000315"/>
    <property type="project" value="UniProtKB"/>
</dbReference>
<dbReference type="GO" id="GO:0042308">
    <property type="term" value="P:negative regulation of protein import into nucleus"/>
    <property type="evidence" value="ECO:0000315"/>
    <property type="project" value="FlyBase"/>
</dbReference>
<dbReference type="GO" id="GO:0045879">
    <property type="term" value="P:negative regulation of smoothened signaling pathway"/>
    <property type="evidence" value="ECO:0000315"/>
    <property type="project" value="FlyBase"/>
</dbReference>
<dbReference type="GO" id="GO:0043065">
    <property type="term" value="P:positive regulation of apoptotic process"/>
    <property type="evidence" value="ECO:0000316"/>
    <property type="project" value="FlyBase"/>
</dbReference>
<dbReference type="GO" id="GO:0046330">
    <property type="term" value="P:positive regulation of JNK cascade"/>
    <property type="evidence" value="ECO:0000315"/>
    <property type="project" value="FlyBase"/>
</dbReference>
<dbReference type="GO" id="GO:0045732">
    <property type="term" value="P:positive regulation of protein catabolic process"/>
    <property type="evidence" value="ECO:0000315"/>
    <property type="project" value="FlyBase"/>
</dbReference>
<dbReference type="GO" id="GO:0043161">
    <property type="term" value="P:proteasome-mediated ubiquitin-dependent protein catabolic process"/>
    <property type="evidence" value="ECO:0000314"/>
    <property type="project" value="FlyBase"/>
</dbReference>
<dbReference type="GO" id="GO:0031648">
    <property type="term" value="P:protein destabilization"/>
    <property type="evidence" value="ECO:0000315"/>
    <property type="project" value="FlyBase"/>
</dbReference>
<dbReference type="GO" id="GO:0070936">
    <property type="term" value="P:protein K48-linked ubiquitination"/>
    <property type="evidence" value="ECO:0000314"/>
    <property type="project" value="FlyBase"/>
</dbReference>
<dbReference type="GO" id="GO:0016567">
    <property type="term" value="P:protein ubiquitination"/>
    <property type="evidence" value="ECO:0000314"/>
    <property type="project" value="FlyBase"/>
</dbReference>
<dbReference type="GO" id="GO:0030162">
    <property type="term" value="P:regulation of proteolysis"/>
    <property type="evidence" value="ECO:0000315"/>
    <property type="project" value="FlyBase"/>
</dbReference>
<dbReference type="GO" id="GO:0007367">
    <property type="term" value="P:segment polarity determination"/>
    <property type="evidence" value="ECO:0000315"/>
    <property type="project" value="UniProtKB"/>
</dbReference>
<dbReference type="CDD" id="cd18520">
    <property type="entry name" value="BACK_roadkill_like"/>
    <property type="match status" value="1"/>
</dbReference>
<dbReference type="CDD" id="cd18345">
    <property type="entry name" value="BTB_POZ_roadkill-like"/>
    <property type="match status" value="1"/>
</dbReference>
<dbReference type="CDD" id="cd03774">
    <property type="entry name" value="MATH_SPOP"/>
    <property type="match status" value="1"/>
</dbReference>
<dbReference type="FunFam" id="2.60.210.10:FF:000028">
    <property type="entry name" value="Speckle-type POZ protein-like"/>
    <property type="match status" value="1"/>
</dbReference>
<dbReference type="FunFam" id="3.30.710.10:FF:000008">
    <property type="entry name" value="Speckle-type POZ protein-like a"/>
    <property type="match status" value="1"/>
</dbReference>
<dbReference type="Gene3D" id="6.10.250.3030">
    <property type="match status" value="1"/>
</dbReference>
<dbReference type="Gene3D" id="6.20.250.50">
    <property type="match status" value="1"/>
</dbReference>
<dbReference type="Gene3D" id="2.60.210.10">
    <property type="entry name" value="Apoptosis, Tumor Necrosis Factor Receptor Associated Protein 2, Chain A"/>
    <property type="match status" value="1"/>
</dbReference>
<dbReference type="Gene3D" id="3.30.710.10">
    <property type="entry name" value="Potassium Channel Kv1.1, Chain A"/>
    <property type="match status" value="1"/>
</dbReference>
<dbReference type="InterPro" id="IPR056423">
    <property type="entry name" value="BACK_BPM_SPOP"/>
</dbReference>
<dbReference type="InterPro" id="IPR000210">
    <property type="entry name" value="BTB/POZ_dom"/>
</dbReference>
<dbReference type="InterPro" id="IPR002083">
    <property type="entry name" value="MATH/TRAF_dom"/>
</dbReference>
<dbReference type="InterPro" id="IPR011333">
    <property type="entry name" value="SKP1/BTB/POZ_sf"/>
</dbReference>
<dbReference type="InterPro" id="IPR008974">
    <property type="entry name" value="TRAF-like"/>
</dbReference>
<dbReference type="PANTHER" id="PTHR24413">
    <property type="entry name" value="SPECKLE-TYPE POZ PROTEIN"/>
    <property type="match status" value="1"/>
</dbReference>
<dbReference type="Pfam" id="PF24570">
    <property type="entry name" value="BACK_BPM_SPOP"/>
    <property type="match status" value="1"/>
</dbReference>
<dbReference type="Pfam" id="PF00651">
    <property type="entry name" value="BTB"/>
    <property type="match status" value="1"/>
</dbReference>
<dbReference type="Pfam" id="PF22486">
    <property type="entry name" value="MATH_2"/>
    <property type="match status" value="1"/>
</dbReference>
<dbReference type="SMART" id="SM00225">
    <property type="entry name" value="BTB"/>
    <property type="match status" value="1"/>
</dbReference>
<dbReference type="SMART" id="SM00061">
    <property type="entry name" value="MATH"/>
    <property type="match status" value="1"/>
</dbReference>
<dbReference type="SUPFAM" id="SSF54695">
    <property type="entry name" value="POZ domain"/>
    <property type="match status" value="1"/>
</dbReference>
<dbReference type="SUPFAM" id="SSF49599">
    <property type="entry name" value="TRAF domain-like"/>
    <property type="match status" value="1"/>
</dbReference>
<dbReference type="PROSITE" id="PS50097">
    <property type="entry name" value="BTB"/>
    <property type="match status" value="1"/>
</dbReference>
<dbReference type="PROSITE" id="PS50144">
    <property type="entry name" value="MATH"/>
    <property type="match status" value="1"/>
</dbReference>
<protein>
    <recommendedName>
        <fullName>Protein roadkill</fullName>
    </recommendedName>
    <alternativeName>
        <fullName>Hh-induced MATH and BTB domain-containing protein</fullName>
    </alternativeName>
</protein>
<comment type="function">
    <text evidence="4 5">Involved in segment polarity. In complex with gft/CUL3, promotes ubiquitination of ci and its subsequent degradation by the proteasome, which results in hh signaling attenuation. This regulation may be important during eye formation for proper packing of ommatidia into a hexagonal array.</text>
</comment>
<comment type="pathway">
    <text>Protein modification; protein ubiquitination.</text>
</comment>
<comment type="subunit">
    <text evidence="5">Interacts with ci and gft/CUL3.</text>
</comment>
<comment type="interaction">
    <interactant intactId="EBI-132658">
        <id>Q9VFP2</id>
    </interactant>
    <interactant intactId="EBI-191917">
        <id>Q9VCI7</id>
        <label>RanBP3</label>
    </interactant>
    <organismsDiffer>false</organismsDiffer>
    <experiments>3</experiments>
</comment>
<comment type="interaction">
    <interactant intactId="EBI-15659276">
        <id>Q9VFP2-2</id>
    </interactant>
    <interactant intactId="EBI-94976">
        <id>P19538</id>
        <label>ci</label>
    </interactant>
    <organismsDiffer>false</organismsDiffer>
    <experiments>8</experiments>
</comment>
<comment type="interaction">
    <interactant intactId="EBI-15659276">
        <id>Q9VFP2-2</id>
    </interactant>
    <interactant intactId="EBI-109873">
        <id>Q9V475</id>
        <label>Cul3</label>
    </interactant>
    <organismsDiffer>false</organismsDiffer>
    <experiments>2</experiments>
</comment>
<comment type="interaction">
    <interactant intactId="EBI-15659276">
        <id>Q9VFP2-2</id>
    </interactant>
    <interactant intactId="EBI-193532">
        <id>Q9VHV8</id>
        <label>puc</label>
    </interactant>
    <organismsDiffer>false</organismsDiffer>
    <experiments>2</experiments>
</comment>
<comment type="interaction">
    <interactant intactId="EBI-15659276">
        <id>Q9VFP2-2</id>
    </interactant>
    <interactant intactId="EBI-15659276">
        <id>Q9VFP2-2</id>
        <label>rdx</label>
    </interactant>
    <organismsDiffer>false</organismsDiffer>
    <experiments>3</experiments>
</comment>
<comment type="subcellular location">
    <subcellularLocation>
        <location evidence="5">Nucleus</location>
    </subcellularLocation>
</comment>
<comment type="alternative products">
    <event type="alternative splicing"/>
    <isoform>
        <id>Q9VFP2-1</id>
        <name evidence="7">1</name>
        <name evidence="8">E</name>
        <sequence type="displayed"/>
    </isoform>
    <isoform>
        <id>Q9VFP2-2</id>
        <name evidence="7">2</name>
        <name evidence="8">B</name>
        <sequence type="described" ref="VSP_022825"/>
    </isoform>
    <isoform>
        <id>Q9VFP2-3</id>
        <name evidence="7">3</name>
        <name evidence="8">C</name>
        <sequence type="described" ref="VSP_022826 VSP_022829"/>
    </isoform>
    <isoform>
        <id>Q9VFP2-4</id>
        <name evidence="7">4</name>
        <name evidence="8">A</name>
        <name evidence="8">F</name>
        <sequence type="described" ref="VSP_022827 VSP_022828"/>
    </isoform>
</comment>
<comment type="tissue specificity">
    <text evidence="5">Expressed near the anterio-posterior compartment boundary of antenna, leg and wing disks.</text>
</comment>
<comment type="developmental stage">
    <text evidence="4">Expressed maternally in stage 1 embryos. Isoform 1 and isoform 4 are expressed zygotically in stage 4 in pole cells. By stage 8, expressed in 14 segmentally repeating stripes. During stage 9 and 10, expression appears in neuroblasts. After stage 14, expression is restricted to clypeolabrum, anal plate and salivary glands.</text>
</comment>
<comment type="induction">
    <text evidence="4 5">By hh during segmentation.</text>
</comment>
<comment type="domain">
    <text>The MATH domain interacts with ci.</text>
</comment>
<comment type="domain">
    <text>The BTB (POZ) domain interacts with gft/CUL3.</text>
</comment>
<comment type="similarity">
    <text evidence="7">Belongs to the Tdpoz family.</text>
</comment>
<gene>
    <name type="primary">rdx</name>
    <name type="synonym">HIB</name>
    <name type="ORF">CG12537</name>
</gene>
<keyword id="KW-0025">Alternative splicing</keyword>
<keyword id="KW-0217">Developmental protein</keyword>
<keyword id="KW-0539">Nucleus</keyword>
<keyword id="KW-1185">Reference proteome</keyword>
<keyword id="KW-0709">Segmentation polarity protein</keyword>
<keyword id="KW-0833">Ubl conjugation pathway</keyword>
<evidence type="ECO:0000255" key="1">
    <source>
        <dbReference type="PROSITE-ProRule" id="PRU00037"/>
    </source>
</evidence>
<evidence type="ECO:0000255" key="2">
    <source>
        <dbReference type="PROSITE-ProRule" id="PRU00129"/>
    </source>
</evidence>
<evidence type="ECO:0000256" key="3">
    <source>
        <dbReference type="SAM" id="MobiDB-lite"/>
    </source>
</evidence>
<evidence type="ECO:0000269" key="4">
    <source>
    </source>
</evidence>
<evidence type="ECO:0000269" key="5">
    <source>
    </source>
</evidence>
<evidence type="ECO:0000303" key="6">
    <source>
    </source>
</evidence>
<evidence type="ECO:0000305" key="7"/>
<evidence type="ECO:0000312" key="8">
    <source>
        <dbReference type="FlyBase" id="FBgn0264493"/>
    </source>
</evidence>
<feature type="chain" id="PRO_0000274593" description="Protein roadkill">
    <location>
        <begin position="1"/>
        <end position="829"/>
    </location>
</feature>
<feature type="domain" description="MATH" evidence="2">
    <location>
        <begin position="486"/>
        <end position="616"/>
    </location>
</feature>
<feature type="domain" description="BTB" evidence="1">
    <location>
        <begin position="655"/>
        <end position="722"/>
    </location>
</feature>
<feature type="region of interest" description="Disordered" evidence="3">
    <location>
        <begin position="24"/>
        <end position="47"/>
    </location>
</feature>
<feature type="region of interest" description="Disordered" evidence="3">
    <location>
        <begin position="106"/>
        <end position="142"/>
    </location>
</feature>
<feature type="region of interest" description="Disordered" evidence="3">
    <location>
        <begin position="266"/>
        <end position="296"/>
    </location>
</feature>
<feature type="region of interest" description="Disordered" evidence="3">
    <location>
        <begin position="313"/>
        <end position="400"/>
    </location>
</feature>
<feature type="compositionally biased region" description="Low complexity" evidence="3">
    <location>
        <begin position="24"/>
        <end position="36"/>
    </location>
</feature>
<feature type="compositionally biased region" description="Low complexity" evidence="3">
    <location>
        <begin position="122"/>
        <end position="140"/>
    </location>
</feature>
<feature type="compositionally biased region" description="Low complexity" evidence="3">
    <location>
        <begin position="266"/>
        <end position="288"/>
    </location>
</feature>
<feature type="compositionally biased region" description="Basic residues" evidence="3">
    <location>
        <begin position="313"/>
        <end position="322"/>
    </location>
</feature>
<feature type="compositionally biased region" description="Low complexity" evidence="3">
    <location>
        <begin position="323"/>
        <end position="353"/>
    </location>
</feature>
<feature type="compositionally biased region" description="Low complexity" evidence="3">
    <location>
        <begin position="372"/>
        <end position="382"/>
    </location>
</feature>
<feature type="compositionally biased region" description="Low complexity" evidence="3">
    <location>
        <begin position="389"/>
        <end position="400"/>
    </location>
</feature>
<feature type="splice variant" id="VSP_022825" description="In isoform 2." evidence="6">
    <location>
        <begin position="1"/>
        <end position="455"/>
    </location>
</feature>
<feature type="splice variant" id="VSP_022826" description="In isoform 3." evidence="6">
    <location>
        <begin position="1"/>
        <end position="426"/>
    </location>
</feature>
<feature type="splice variant" id="VSP_022827" description="In isoform 4." evidence="7">
    <location>
        <begin position="1"/>
        <end position="423"/>
    </location>
</feature>
<feature type="splice variant" id="VSP_022828" description="In isoform 4." evidence="7">
    <original>AANFCDK</original>
    <variation>MDLIQEP</variation>
    <location>
        <begin position="424"/>
        <end position="430"/>
    </location>
</feature>
<feature type="splice variant" id="VSP_022829" description="In isoform 3." evidence="6">
    <original>FCDK</original>
    <variation>MALA</variation>
    <location>
        <begin position="427"/>
        <end position="430"/>
    </location>
</feature>
<feature type="sequence conflict" description="In Ref. 1; ABG24573." evidence="7" ref="1">
    <original>K</original>
    <variation>T</variation>
    <location>
        <position position="536"/>
    </location>
</feature>
<feature type="sequence conflict" description="In Ref. 1; ABG24573." evidence="7" ref="1">
    <original>G</original>
    <variation>D</variation>
    <location>
        <position position="716"/>
    </location>
</feature>
<feature type="sequence conflict" description="In Ref. 1; ABG24573." evidence="7" ref="1">
    <original>CV</original>
    <variation>WL</variation>
    <location>
        <begin position="749"/>
        <end position="750"/>
    </location>
</feature>